<dbReference type="EMBL" id="U49044">
    <property type="protein sequence ID" value="AAB82615.1"/>
    <property type="molecule type" value="mRNA"/>
</dbReference>
<dbReference type="EMBL" id="AF268393">
    <property type="protein sequence ID" value="AAG44759.1"/>
    <property type="molecule type" value="mRNA"/>
</dbReference>
<dbReference type="GO" id="GO:0005507">
    <property type="term" value="F:copper ion binding"/>
    <property type="evidence" value="ECO:0007669"/>
    <property type="project" value="InterPro"/>
</dbReference>
<dbReference type="GO" id="GO:0008270">
    <property type="term" value="F:zinc ion binding"/>
    <property type="evidence" value="ECO:0007669"/>
    <property type="project" value="InterPro"/>
</dbReference>
<dbReference type="GO" id="GO:1990748">
    <property type="term" value="P:cellular detoxification"/>
    <property type="evidence" value="ECO:0000250"/>
    <property type="project" value="UniProtKB"/>
</dbReference>
<dbReference type="GO" id="GO:0006878">
    <property type="term" value="P:intracellular copper ion homeostasis"/>
    <property type="evidence" value="ECO:0007669"/>
    <property type="project" value="InterPro"/>
</dbReference>
<dbReference type="InterPro" id="IPR044671">
    <property type="entry name" value="MT3"/>
</dbReference>
<dbReference type="PANTHER" id="PTHR33357">
    <property type="entry name" value="METALLOTHIONEIN-LIKE PROTEIN 3"/>
    <property type="match status" value="1"/>
</dbReference>
<dbReference type="PANTHER" id="PTHR33357:SF3">
    <property type="entry name" value="METALLOTHIONEIN-LIKE PROTEIN 3"/>
    <property type="match status" value="1"/>
</dbReference>
<keyword id="KW-0479">Metal-binding</keyword>
<keyword id="KW-0480">Metal-thiolate cluster</keyword>
<evidence type="ECO:0000305" key="1"/>
<proteinExistence type="inferred from homology"/>
<protein>
    <recommendedName>
        <fullName>Metallothionein-like protein type 3</fullName>
        <shortName>MT-3</shortName>
    </recommendedName>
    <alternativeName>
        <fullName>MWMT3</fullName>
    </alternativeName>
</protein>
<comment type="function">
    <text>Metallothioneins have a high content of cysteine residues that bind various heavy metals.</text>
</comment>
<comment type="similarity">
    <text evidence="1">Belongs to the metallothionein superfamily. Type 15 family.</text>
</comment>
<sequence>MSTCGNCDCVDKSQCVKKGNSYGIDIVETEKSYVDEVIVAAEAAEHDGKCKCGAACACTDCKCGN</sequence>
<reference key="1">
    <citation type="journal article" date="1997" name="Plant Physiol.">
        <title>Differential gene expression in ripening banana fruit.</title>
        <authorList>
            <person name="Clendennen S.K."/>
            <person name="May G.D."/>
        </authorList>
    </citation>
    <scope>NUCLEOTIDE SEQUENCE [MRNA]</scope>
    <source>
        <strain>cv. Grand nain</strain>
    </source>
</reference>
<reference key="2">
    <citation type="journal article" date="2002" name="Physiol. Plantarum">
        <title>Differential expression and characterization of three metallothionein-like genes in Cavendish banana (Musa acuminata).</title>
        <authorList>
            <person name="Liu P."/>
            <person name="Goh C.-J."/>
            <person name="Loh C.-S."/>
            <person name="Pua E.-C."/>
        </authorList>
    </citation>
    <scope>NUCLEOTIDE SEQUENCE [MRNA]</scope>
</reference>
<organism>
    <name type="scientific">Musa acuminata</name>
    <name type="common">Banana</name>
    <name type="synonym">Musa cavendishii</name>
    <dbReference type="NCBI Taxonomy" id="4641"/>
    <lineage>
        <taxon>Eukaryota</taxon>
        <taxon>Viridiplantae</taxon>
        <taxon>Streptophyta</taxon>
        <taxon>Embryophyta</taxon>
        <taxon>Tracheophyta</taxon>
        <taxon>Spermatophyta</taxon>
        <taxon>Magnoliopsida</taxon>
        <taxon>Liliopsida</taxon>
        <taxon>Zingiberales</taxon>
        <taxon>Musaceae</taxon>
        <taxon>Musa</taxon>
    </lineage>
</organism>
<accession>Q40256</accession>
<feature type="chain" id="PRO_0000197416" description="Metallothionein-like protein type 3">
    <location>
        <begin position="1"/>
        <end position="65"/>
    </location>
</feature>
<name>MT3_MUSAC</name>